<comment type="function">
    <text evidence="1">Involved in transcription.</text>
</comment>
<comment type="subcellular location">
    <subcellularLocation>
        <location evidence="2">Cytoplasm</location>
    </subcellularLocation>
    <subcellularLocation>
        <location evidence="2">Nucleus</location>
    </subcellularLocation>
</comment>
<comment type="similarity">
    <text evidence="3">Belongs to the SWT1 family.</text>
</comment>
<evidence type="ECO:0000250" key="1">
    <source>
        <dbReference type="UniProtKB" id="Q12104"/>
    </source>
</evidence>
<evidence type="ECO:0000269" key="2">
    <source>
    </source>
</evidence>
<evidence type="ECO:0000305" key="3"/>
<keyword id="KW-0963">Cytoplasm</keyword>
<keyword id="KW-0539">Nucleus</keyword>
<keyword id="KW-1185">Reference proteome</keyword>
<keyword id="KW-0804">Transcription</keyword>
<dbReference type="EMBL" id="CU329672">
    <property type="protein sequence ID" value="CAB76224.2"/>
    <property type="molecule type" value="Genomic_DNA"/>
</dbReference>
<dbReference type="PIR" id="T50422">
    <property type="entry name" value="T50422"/>
</dbReference>
<dbReference type="RefSeq" id="NP_588018.2">
    <property type="nucleotide sequence ID" value="NM_001023009.2"/>
</dbReference>
<dbReference type="SMR" id="Q9P7J1"/>
<dbReference type="BioGRID" id="275465">
    <property type="interactions" value="1"/>
</dbReference>
<dbReference type="FunCoup" id="Q9P7J1">
    <property type="interactions" value="346"/>
</dbReference>
<dbReference type="STRING" id="284812.Q9P7J1"/>
<dbReference type="iPTMnet" id="Q9P7J1"/>
<dbReference type="PaxDb" id="4896-SPCC24B10.15.1"/>
<dbReference type="EnsemblFungi" id="SPCC24B10.15.1">
    <property type="protein sequence ID" value="SPCC24B10.15.1:pep"/>
    <property type="gene ID" value="SPCC24B10.15"/>
</dbReference>
<dbReference type="PomBase" id="SPCC24B10.15">
    <property type="gene designation" value="swt1"/>
</dbReference>
<dbReference type="VEuPathDB" id="FungiDB:SPCC24B10.15"/>
<dbReference type="eggNOG" id="KOG4689">
    <property type="taxonomic scope" value="Eukaryota"/>
</dbReference>
<dbReference type="HOGENOM" id="CLU_046583_0_0_1"/>
<dbReference type="InParanoid" id="Q9P7J1"/>
<dbReference type="OMA" id="YIHWYTC"/>
<dbReference type="PRO" id="PR:Q9P7J1"/>
<dbReference type="Proteomes" id="UP000002485">
    <property type="component" value="Chromosome III"/>
</dbReference>
<dbReference type="GO" id="GO:0005829">
    <property type="term" value="C:cytosol"/>
    <property type="evidence" value="ECO:0007005"/>
    <property type="project" value="PomBase"/>
</dbReference>
<dbReference type="GO" id="GO:0005634">
    <property type="term" value="C:nucleus"/>
    <property type="evidence" value="ECO:0007005"/>
    <property type="project" value="PomBase"/>
</dbReference>
<dbReference type="GO" id="GO:0004521">
    <property type="term" value="F:RNA endonuclease activity"/>
    <property type="evidence" value="ECO:0000266"/>
    <property type="project" value="PomBase"/>
</dbReference>
<dbReference type="GO" id="GO:0071032">
    <property type="term" value="P:nuclear mRNA surveillance of mRNP export"/>
    <property type="evidence" value="ECO:0000266"/>
    <property type="project" value="PomBase"/>
</dbReference>
<dbReference type="CDD" id="cd18727">
    <property type="entry name" value="PIN_Swt1-like"/>
    <property type="match status" value="1"/>
</dbReference>
<dbReference type="FunFam" id="3.40.50.1010:FF:000045">
    <property type="entry name" value="Transcriptional protein swt1"/>
    <property type="match status" value="1"/>
</dbReference>
<dbReference type="Gene3D" id="3.40.50.1010">
    <property type="entry name" value="5'-nuclease"/>
    <property type="match status" value="1"/>
</dbReference>
<dbReference type="InterPro" id="IPR029060">
    <property type="entry name" value="PIN-like_dom_sf"/>
</dbReference>
<dbReference type="InterPro" id="IPR002716">
    <property type="entry name" value="PIN_dom"/>
</dbReference>
<dbReference type="InterPro" id="IPR052626">
    <property type="entry name" value="SWT1_Regulator"/>
</dbReference>
<dbReference type="PANTHER" id="PTHR16161">
    <property type="entry name" value="TRANSCRIPTIONAL PROTEIN SWT1"/>
    <property type="match status" value="1"/>
</dbReference>
<dbReference type="PANTHER" id="PTHR16161:SF0">
    <property type="entry name" value="TRANSCRIPTIONAL PROTEIN SWT1"/>
    <property type="match status" value="1"/>
</dbReference>
<dbReference type="Pfam" id="PF13638">
    <property type="entry name" value="PIN_4"/>
    <property type="match status" value="1"/>
</dbReference>
<dbReference type="SMART" id="SM00670">
    <property type="entry name" value="PINc"/>
    <property type="match status" value="1"/>
</dbReference>
<dbReference type="SUPFAM" id="SSF88723">
    <property type="entry name" value="PIN domain-like"/>
    <property type="match status" value="1"/>
</dbReference>
<sequence>MDRMEIDDQAGIDFVTESINSERARNRWSTSHIPSLSEINPSSFQSPSPSPFASSTSLASKPARYSKPLGLFVLDTNFLLSHLSLCQNLIEFLTARCPRLVVVLPWTVLQELDGLKSESSSTCGYLARQAHNFLLQCFRSNVSSLRGQKVHEHCSSTEKGDDAILDCCIYYQEEKLIPAVLLSDDKNLSIKAAVHHIQSLSFSKGLEAASIVQTSFPSAFSSNSENLENLSMDIDLTVSQPLATATNHRNQGASTVDIPMDRTHDNSIWASRYAHFPPYDKKKDTTRSAADYIPYTYTALTKEEILHASHPRACKLLDQITKIMVEETAFLLSRHLLKLWGDYDLAMTKLLASPQFPPQNINDVGHELYIHWYTCFDGYLPAQERSNLKSKAELWNEWMLWAERGIGIGPKNQEELQTYVTFWSNIWTLLSRREILGDQASTYIGFREQNIEKWVERSGRERILS</sequence>
<organism>
    <name type="scientific">Schizosaccharomyces pombe (strain 972 / ATCC 24843)</name>
    <name type="common">Fission yeast</name>
    <dbReference type="NCBI Taxonomy" id="284812"/>
    <lineage>
        <taxon>Eukaryota</taxon>
        <taxon>Fungi</taxon>
        <taxon>Dikarya</taxon>
        <taxon>Ascomycota</taxon>
        <taxon>Taphrinomycotina</taxon>
        <taxon>Schizosaccharomycetes</taxon>
        <taxon>Schizosaccharomycetales</taxon>
        <taxon>Schizosaccharomycetaceae</taxon>
        <taxon>Schizosaccharomyces</taxon>
    </lineage>
</organism>
<accession>Q9P7J1</accession>
<feature type="chain" id="PRO_0000353139" description="Transcriptional protein swt1">
    <location>
        <begin position="1"/>
        <end position="465"/>
    </location>
</feature>
<feature type="domain" description="PINc">
    <location>
        <begin position="70"/>
        <end position="190"/>
    </location>
</feature>
<name>SWT1_SCHPO</name>
<reference key="1">
    <citation type="journal article" date="2002" name="Nature">
        <title>The genome sequence of Schizosaccharomyces pombe.</title>
        <authorList>
            <person name="Wood V."/>
            <person name="Gwilliam R."/>
            <person name="Rajandream M.A."/>
            <person name="Lyne M.H."/>
            <person name="Lyne R."/>
            <person name="Stewart A."/>
            <person name="Sgouros J.G."/>
            <person name="Peat N."/>
            <person name="Hayles J."/>
            <person name="Baker S.G."/>
            <person name="Basham D."/>
            <person name="Bowman S."/>
            <person name="Brooks K."/>
            <person name="Brown D."/>
            <person name="Brown S."/>
            <person name="Chillingworth T."/>
            <person name="Churcher C.M."/>
            <person name="Collins M."/>
            <person name="Connor R."/>
            <person name="Cronin A."/>
            <person name="Davis P."/>
            <person name="Feltwell T."/>
            <person name="Fraser A."/>
            <person name="Gentles S."/>
            <person name="Goble A."/>
            <person name="Hamlin N."/>
            <person name="Harris D.E."/>
            <person name="Hidalgo J."/>
            <person name="Hodgson G."/>
            <person name="Holroyd S."/>
            <person name="Hornsby T."/>
            <person name="Howarth S."/>
            <person name="Huckle E.J."/>
            <person name="Hunt S."/>
            <person name="Jagels K."/>
            <person name="James K.D."/>
            <person name="Jones L."/>
            <person name="Jones M."/>
            <person name="Leather S."/>
            <person name="McDonald S."/>
            <person name="McLean J."/>
            <person name="Mooney P."/>
            <person name="Moule S."/>
            <person name="Mungall K.L."/>
            <person name="Murphy L.D."/>
            <person name="Niblett D."/>
            <person name="Odell C."/>
            <person name="Oliver K."/>
            <person name="O'Neil S."/>
            <person name="Pearson D."/>
            <person name="Quail M.A."/>
            <person name="Rabbinowitsch E."/>
            <person name="Rutherford K.M."/>
            <person name="Rutter S."/>
            <person name="Saunders D."/>
            <person name="Seeger K."/>
            <person name="Sharp S."/>
            <person name="Skelton J."/>
            <person name="Simmonds M.N."/>
            <person name="Squares R."/>
            <person name="Squares S."/>
            <person name="Stevens K."/>
            <person name="Taylor K."/>
            <person name="Taylor R.G."/>
            <person name="Tivey A."/>
            <person name="Walsh S.V."/>
            <person name="Warren T."/>
            <person name="Whitehead S."/>
            <person name="Woodward J.R."/>
            <person name="Volckaert G."/>
            <person name="Aert R."/>
            <person name="Robben J."/>
            <person name="Grymonprez B."/>
            <person name="Weltjens I."/>
            <person name="Vanstreels E."/>
            <person name="Rieger M."/>
            <person name="Schaefer M."/>
            <person name="Mueller-Auer S."/>
            <person name="Gabel C."/>
            <person name="Fuchs M."/>
            <person name="Duesterhoeft A."/>
            <person name="Fritzc C."/>
            <person name="Holzer E."/>
            <person name="Moestl D."/>
            <person name="Hilbert H."/>
            <person name="Borzym K."/>
            <person name="Langer I."/>
            <person name="Beck A."/>
            <person name="Lehrach H."/>
            <person name="Reinhardt R."/>
            <person name="Pohl T.M."/>
            <person name="Eger P."/>
            <person name="Zimmermann W."/>
            <person name="Wedler H."/>
            <person name="Wambutt R."/>
            <person name="Purnelle B."/>
            <person name="Goffeau A."/>
            <person name="Cadieu E."/>
            <person name="Dreano S."/>
            <person name="Gloux S."/>
            <person name="Lelaure V."/>
            <person name="Mottier S."/>
            <person name="Galibert F."/>
            <person name="Aves S.J."/>
            <person name="Xiang Z."/>
            <person name="Hunt C."/>
            <person name="Moore K."/>
            <person name="Hurst S.M."/>
            <person name="Lucas M."/>
            <person name="Rochet M."/>
            <person name="Gaillardin C."/>
            <person name="Tallada V.A."/>
            <person name="Garzon A."/>
            <person name="Thode G."/>
            <person name="Daga R.R."/>
            <person name="Cruzado L."/>
            <person name="Jimenez J."/>
            <person name="Sanchez M."/>
            <person name="del Rey F."/>
            <person name="Benito J."/>
            <person name="Dominguez A."/>
            <person name="Revuelta J.L."/>
            <person name="Moreno S."/>
            <person name="Armstrong J."/>
            <person name="Forsburg S.L."/>
            <person name="Cerutti L."/>
            <person name="Lowe T."/>
            <person name="McCombie W.R."/>
            <person name="Paulsen I."/>
            <person name="Potashkin J."/>
            <person name="Shpakovski G.V."/>
            <person name="Ussery D."/>
            <person name="Barrell B.G."/>
            <person name="Nurse P."/>
        </authorList>
    </citation>
    <scope>NUCLEOTIDE SEQUENCE [LARGE SCALE GENOMIC DNA]</scope>
    <source>
        <strain>972 / ATCC 24843</strain>
    </source>
</reference>
<reference key="2">
    <citation type="journal article" date="2011" name="Science">
        <title>Comparative functional genomics of the fission yeasts.</title>
        <authorList>
            <person name="Rhind N."/>
            <person name="Chen Z."/>
            <person name="Yassour M."/>
            <person name="Thompson D.A."/>
            <person name="Haas B.J."/>
            <person name="Habib N."/>
            <person name="Wapinski I."/>
            <person name="Roy S."/>
            <person name="Lin M.F."/>
            <person name="Heiman D.I."/>
            <person name="Young S.K."/>
            <person name="Furuya K."/>
            <person name="Guo Y."/>
            <person name="Pidoux A."/>
            <person name="Chen H.M."/>
            <person name="Robbertse B."/>
            <person name="Goldberg J.M."/>
            <person name="Aoki K."/>
            <person name="Bayne E.H."/>
            <person name="Berlin A.M."/>
            <person name="Desjardins C.A."/>
            <person name="Dobbs E."/>
            <person name="Dukaj L."/>
            <person name="Fan L."/>
            <person name="FitzGerald M.G."/>
            <person name="French C."/>
            <person name="Gujja S."/>
            <person name="Hansen K."/>
            <person name="Keifenheim D."/>
            <person name="Levin J.Z."/>
            <person name="Mosher R.A."/>
            <person name="Mueller C.A."/>
            <person name="Pfiffner J."/>
            <person name="Priest M."/>
            <person name="Russ C."/>
            <person name="Smialowska A."/>
            <person name="Swoboda P."/>
            <person name="Sykes S.M."/>
            <person name="Vaughn M."/>
            <person name="Vengrova S."/>
            <person name="Yoder R."/>
            <person name="Zeng Q."/>
            <person name="Allshire R."/>
            <person name="Baulcombe D."/>
            <person name="Birren B.W."/>
            <person name="Brown W."/>
            <person name="Ekwall K."/>
            <person name="Kellis M."/>
            <person name="Leatherwood J."/>
            <person name="Levin H."/>
            <person name="Margalit H."/>
            <person name="Martienssen R."/>
            <person name="Nieduszynski C.A."/>
            <person name="Spatafora J.W."/>
            <person name="Friedman N."/>
            <person name="Dalgaard J.Z."/>
            <person name="Baumann P."/>
            <person name="Niki H."/>
            <person name="Regev A."/>
            <person name="Nusbaum C."/>
        </authorList>
    </citation>
    <scope>REVISION OF GENE MODEL</scope>
</reference>
<reference evidence="3" key="3">
    <citation type="journal article" date="2006" name="Nat. Biotechnol.">
        <title>ORFeome cloning and global analysis of protein localization in the fission yeast Schizosaccharomyces pombe.</title>
        <authorList>
            <person name="Matsuyama A."/>
            <person name="Arai R."/>
            <person name="Yashiroda Y."/>
            <person name="Shirai A."/>
            <person name="Kamata A."/>
            <person name="Sekido S."/>
            <person name="Kobayashi Y."/>
            <person name="Hashimoto A."/>
            <person name="Hamamoto M."/>
            <person name="Hiraoka Y."/>
            <person name="Horinouchi S."/>
            <person name="Yoshida M."/>
        </authorList>
    </citation>
    <scope>SUBCELLULAR LOCATION [LARGE SCALE ANALYSIS]</scope>
</reference>
<protein>
    <recommendedName>
        <fullName>Transcriptional protein swt1</fullName>
    </recommendedName>
</protein>
<gene>
    <name evidence="1" type="primary">swt1</name>
    <name type="ORF">SPCC24B10.15</name>
</gene>
<proteinExistence type="inferred from homology"/>